<protein>
    <recommendedName>
        <fullName evidence="1">Cytochrome b559 subunit beta</fullName>
    </recommendedName>
    <alternativeName>
        <fullName evidence="1">PSII reaction center subunit VI</fullName>
    </alternativeName>
</protein>
<dbReference type="EMBL" id="AY741371">
    <property type="protein sequence ID" value="AAX13885.1"/>
    <property type="molecule type" value="Genomic_DNA"/>
</dbReference>
<dbReference type="RefSeq" id="YP_277386.1">
    <property type="nucleotide sequence ID" value="NC_007288.1"/>
</dbReference>
<dbReference type="SMR" id="Q4G381"/>
<dbReference type="STRING" id="2903.Q4G381"/>
<dbReference type="GeneID" id="3562470"/>
<dbReference type="GO" id="GO:0009535">
    <property type="term" value="C:chloroplast thylakoid membrane"/>
    <property type="evidence" value="ECO:0007669"/>
    <property type="project" value="UniProtKB-SubCell"/>
</dbReference>
<dbReference type="GO" id="GO:0009539">
    <property type="term" value="C:photosystem II reaction center"/>
    <property type="evidence" value="ECO:0007669"/>
    <property type="project" value="InterPro"/>
</dbReference>
<dbReference type="GO" id="GO:0009055">
    <property type="term" value="F:electron transfer activity"/>
    <property type="evidence" value="ECO:0007669"/>
    <property type="project" value="UniProtKB-UniRule"/>
</dbReference>
<dbReference type="GO" id="GO:0020037">
    <property type="term" value="F:heme binding"/>
    <property type="evidence" value="ECO:0007669"/>
    <property type="project" value="InterPro"/>
</dbReference>
<dbReference type="GO" id="GO:0005506">
    <property type="term" value="F:iron ion binding"/>
    <property type="evidence" value="ECO:0007669"/>
    <property type="project" value="UniProtKB-UniRule"/>
</dbReference>
<dbReference type="GO" id="GO:0009767">
    <property type="term" value="P:photosynthetic electron transport chain"/>
    <property type="evidence" value="ECO:0007669"/>
    <property type="project" value="InterPro"/>
</dbReference>
<dbReference type="HAMAP" id="MF_00643">
    <property type="entry name" value="PSII_PsbF"/>
    <property type="match status" value="1"/>
</dbReference>
<dbReference type="InterPro" id="IPR006241">
    <property type="entry name" value="PSII_cyt_b559_bsu"/>
</dbReference>
<dbReference type="InterPro" id="IPR006216">
    <property type="entry name" value="PSII_cyt_b559_CS"/>
</dbReference>
<dbReference type="InterPro" id="IPR013081">
    <property type="entry name" value="PSII_cyt_b559_N"/>
</dbReference>
<dbReference type="NCBIfam" id="TIGR01333">
    <property type="entry name" value="cyt_b559_beta"/>
    <property type="match status" value="1"/>
</dbReference>
<dbReference type="Pfam" id="PF00283">
    <property type="entry name" value="Cytochrom_B559"/>
    <property type="match status" value="1"/>
</dbReference>
<dbReference type="PIRSF" id="PIRSF000037">
    <property type="entry name" value="PsbF"/>
    <property type="match status" value="1"/>
</dbReference>
<dbReference type="SUPFAM" id="SSF161045">
    <property type="entry name" value="Cytochrome b559 subunits"/>
    <property type="match status" value="1"/>
</dbReference>
<dbReference type="PROSITE" id="PS00537">
    <property type="entry name" value="CYTOCHROME_B559"/>
    <property type="match status" value="1"/>
</dbReference>
<name>PSBF_EMIHU</name>
<comment type="function">
    <text evidence="1">This b-type cytochrome is tightly associated with the reaction center of photosystem II (PSII). PSII is a light-driven water:plastoquinone oxidoreductase that uses light energy to abstract electrons from H(2)O, generating O(2) and a proton gradient subsequently used for ATP formation. It consists of a core antenna complex that captures photons, and an electron transfer chain that converts photonic excitation into a charge separation.</text>
</comment>
<comment type="cofactor">
    <cofactor evidence="1">
        <name>heme b</name>
        <dbReference type="ChEBI" id="CHEBI:60344"/>
    </cofactor>
    <text evidence="1">With its partner (PsbE) binds heme. PSII binds additional chlorophylls, carotenoids and specific lipids.</text>
</comment>
<comment type="subunit">
    <text evidence="1">Heterodimer of an alpha subunit and a beta subunit. PSII is composed of 1 copy each of membrane proteins PsbA, PsbB, PsbC, PsbD, PsbE, PsbF, PsbH, PsbI, PsbJ, PsbK, PsbL, PsbM, PsbT, PsbX, PsbY, PsbZ, Psb30/Ycf12, at least 3 peripheral proteins of the oxygen-evolving complex and a large number of cofactors. It forms dimeric complexes.</text>
</comment>
<comment type="subcellular location">
    <subcellularLocation>
        <location evidence="1">Plastid</location>
        <location evidence="1">Chloroplast thylakoid membrane</location>
        <topology evidence="1">Single-pass membrane protein</topology>
    </subcellularLocation>
</comment>
<comment type="similarity">
    <text evidence="1">Belongs to the PsbE/PsbF family.</text>
</comment>
<geneLocation type="chloroplast"/>
<sequence>MINTNQPVAYPIFTFRWLTIHALAVPTVFFLGAITSMQFIQR</sequence>
<proteinExistence type="inferred from homology"/>
<feature type="chain" id="PRO_0000233638" description="Cytochrome b559 subunit beta">
    <location>
        <begin position="1"/>
        <end position="42"/>
    </location>
</feature>
<feature type="transmembrane region" description="Helical" evidence="1">
    <location>
        <begin position="17"/>
        <end position="33"/>
    </location>
</feature>
<feature type="binding site" description="axial binding residue" evidence="1">
    <location>
        <position position="21"/>
    </location>
    <ligand>
        <name>heme</name>
        <dbReference type="ChEBI" id="CHEBI:30413"/>
        <note>ligand shared with alpha subunit</note>
    </ligand>
    <ligandPart>
        <name>Fe</name>
        <dbReference type="ChEBI" id="CHEBI:18248"/>
    </ligandPart>
</feature>
<accession>Q4G381</accession>
<gene>
    <name evidence="1" type="primary">psbF</name>
</gene>
<keyword id="KW-0150">Chloroplast</keyword>
<keyword id="KW-0249">Electron transport</keyword>
<keyword id="KW-0349">Heme</keyword>
<keyword id="KW-0408">Iron</keyword>
<keyword id="KW-0472">Membrane</keyword>
<keyword id="KW-0479">Metal-binding</keyword>
<keyword id="KW-0602">Photosynthesis</keyword>
<keyword id="KW-0604">Photosystem II</keyword>
<keyword id="KW-0934">Plastid</keyword>
<keyword id="KW-0793">Thylakoid</keyword>
<keyword id="KW-0812">Transmembrane</keyword>
<keyword id="KW-1133">Transmembrane helix</keyword>
<keyword id="KW-0813">Transport</keyword>
<reference key="1">
    <citation type="journal article" date="2005" name="DNA Res.">
        <title>The complete plastid genome sequence of the haptophyte Emiliania huxleyi: a comparison to other plastid genomes.</title>
        <authorList>
            <person name="Sanchez-Puerta M.V."/>
            <person name="Bachvaroff T.R."/>
            <person name="Delwiche C.F."/>
        </authorList>
    </citation>
    <scope>NUCLEOTIDE SEQUENCE [LARGE SCALE GENOMIC DNA]</scope>
    <source>
        <strain>CCMP373 / CSIRO-CS-57 / BT6</strain>
    </source>
</reference>
<evidence type="ECO:0000255" key="1">
    <source>
        <dbReference type="HAMAP-Rule" id="MF_00643"/>
    </source>
</evidence>
<organism>
    <name type="scientific">Emiliania huxleyi</name>
    <name type="common">Coccolithophore</name>
    <name type="synonym">Pontosphaera huxleyi</name>
    <dbReference type="NCBI Taxonomy" id="2903"/>
    <lineage>
        <taxon>Eukaryota</taxon>
        <taxon>Haptista</taxon>
        <taxon>Haptophyta</taxon>
        <taxon>Prymnesiophyceae</taxon>
        <taxon>Isochrysidales</taxon>
        <taxon>Noelaerhabdaceae</taxon>
        <taxon>Emiliania</taxon>
    </lineage>
</organism>